<reference key="1">
    <citation type="journal article" date="2003" name="J. Bacteriol.">
        <title>Comparative genomics of Salmonella enterica serovar Typhi strains Ty2 and CT18.</title>
        <authorList>
            <person name="Deng W."/>
            <person name="Liou S.-R."/>
            <person name="Plunkett G. III"/>
            <person name="Mayhew G.F."/>
            <person name="Rose D.J."/>
            <person name="Burland V."/>
            <person name="Kodoyianni V."/>
            <person name="Schwartz D.C."/>
            <person name="Blattner F.R."/>
        </authorList>
    </citation>
    <scope>NUCLEOTIDE SEQUENCE [LARGE SCALE GENOMIC DNA]</scope>
    <source>
        <strain>ATCC 700931 / Ty2</strain>
    </source>
</reference>
<reference key="2">
    <citation type="journal article" date="2001" name="Nature">
        <title>Complete genome sequence of a multiple drug resistant Salmonella enterica serovar Typhi CT18.</title>
        <authorList>
            <person name="Parkhill J."/>
            <person name="Dougan G."/>
            <person name="James K.D."/>
            <person name="Thomson N.R."/>
            <person name="Pickard D."/>
            <person name="Wain J."/>
            <person name="Churcher C.M."/>
            <person name="Mungall K.L."/>
            <person name="Bentley S.D."/>
            <person name="Holden M.T.G."/>
            <person name="Sebaihia M."/>
            <person name="Baker S."/>
            <person name="Basham D."/>
            <person name="Brooks K."/>
            <person name="Chillingworth T."/>
            <person name="Connerton P."/>
            <person name="Cronin A."/>
            <person name="Davis P."/>
            <person name="Davies R.M."/>
            <person name="Dowd L."/>
            <person name="White N."/>
            <person name="Farrar J."/>
            <person name="Feltwell T."/>
            <person name="Hamlin N."/>
            <person name="Haque A."/>
            <person name="Hien T.T."/>
            <person name="Holroyd S."/>
            <person name="Jagels K."/>
            <person name="Krogh A."/>
            <person name="Larsen T.S."/>
            <person name="Leather S."/>
            <person name="Moule S."/>
            <person name="O'Gaora P."/>
            <person name="Parry C."/>
            <person name="Quail M.A."/>
            <person name="Rutherford K.M."/>
            <person name="Simmonds M."/>
            <person name="Skelton J."/>
            <person name="Stevens K."/>
            <person name="Whitehead S."/>
            <person name="Barrell B.G."/>
        </authorList>
    </citation>
    <scope>NUCLEOTIDE SEQUENCE [LARGE SCALE GENOMIC DNA]</scope>
    <source>
        <strain>CT18</strain>
    </source>
</reference>
<feature type="chain" id="PRO_0000150335" description="Cysteine desulfurase">
    <location>
        <begin position="1"/>
        <end position="406"/>
    </location>
</feature>
<feature type="active site" description="Cysteine persulfide intermediate" evidence="1">
    <location>
        <position position="364"/>
    </location>
</feature>
<feature type="modified residue" description="N6-(pyridoxal phosphate)lysine" evidence="1">
    <location>
        <position position="226"/>
    </location>
</feature>
<keyword id="KW-0963">Cytoplasm</keyword>
<keyword id="KW-0456">Lyase</keyword>
<keyword id="KW-0663">Pyridoxal phosphate</keyword>
<keyword id="KW-0808">Transferase</keyword>
<evidence type="ECO:0000255" key="1">
    <source>
        <dbReference type="HAMAP-Rule" id="MF_01831"/>
    </source>
</evidence>
<proteinExistence type="inferred from homology"/>
<comment type="function">
    <text evidence="1">Cysteine desulfurases mobilize the sulfur from L-cysteine to yield L-alanine, an essential step in sulfur metabolism for biosynthesis of a variety of sulfur-containing biomolecules. Component of the suf operon, which is activated and required under specific conditions such as oxidative stress and iron limitation. Acts as a potent selenocysteine lyase in vitro, that mobilizes selenium from L-selenocysteine. Selenocysteine lyase activity is however unsure in vivo.</text>
</comment>
<comment type="catalytic activity">
    <reaction evidence="1">
        <text>(sulfur carrier)-H + L-cysteine = (sulfur carrier)-SH + L-alanine</text>
        <dbReference type="Rhea" id="RHEA:43892"/>
        <dbReference type="Rhea" id="RHEA-COMP:14737"/>
        <dbReference type="Rhea" id="RHEA-COMP:14739"/>
        <dbReference type="ChEBI" id="CHEBI:29917"/>
        <dbReference type="ChEBI" id="CHEBI:35235"/>
        <dbReference type="ChEBI" id="CHEBI:57972"/>
        <dbReference type="ChEBI" id="CHEBI:64428"/>
        <dbReference type="EC" id="2.8.1.7"/>
    </reaction>
</comment>
<comment type="catalytic activity">
    <reaction evidence="1">
        <text>L-selenocysteine + AH2 = hydrogenselenide + L-alanine + A + H(+)</text>
        <dbReference type="Rhea" id="RHEA:11632"/>
        <dbReference type="ChEBI" id="CHEBI:13193"/>
        <dbReference type="ChEBI" id="CHEBI:15378"/>
        <dbReference type="ChEBI" id="CHEBI:17499"/>
        <dbReference type="ChEBI" id="CHEBI:29317"/>
        <dbReference type="ChEBI" id="CHEBI:57843"/>
        <dbReference type="ChEBI" id="CHEBI:57972"/>
        <dbReference type="EC" id="4.4.1.16"/>
    </reaction>
</comment>
<comment type="cofactor">
    <cofactor evidence="1">
        <name>pyridoxal 5'-phosphate</name>
        <dbReference type="ChEBI" id="CHEBI:597326"/>
    </cofactor>
</comment>
<comment type="pathway">
    <text evidence="1">Cofactor biosynthesis; iron-sulfur cluster biosynthesis.</text>
</comment>
<comment type="subunit">
    <text evidence="1">Homodimer. Interacts with SufE and the SufBCD complex composed of SufB, SufC and SufD. The interaction with SufE is required to mediate the direct transfer of the sulfur atom from the S-sulfanylcysteine.</text>
</comment>
<comment type="subcellular location">
    <subcellularLocation>
        <location evidence="1">Cytoplasm</location>
    </subcellularLocation>
</comment>
<comment type="similarity">
    <text evidence="1">Belongs to the class-V pyridoxal-phosphate-dependent aminotransferase family. Csd subfamily.</text>
</comment>
<organism>
    <name type="scientific">Salmonella typhi</name>
    <dbReference type="NCBI Taxonomy" id="90370"/>
    <lineage>
        <taxon>Bacteria</taxon>
        <taxon>Pseudomonadati</taxon>
        <taxon>Pseudomonadota</taxon>
        <taxon>Gammaproteobacteria</taxon>
        <taxon>Enterobacterales</taxon>
        <taxon>Enterobacteriaceae</taxon>
        <taxon>Salmonella</taxon>
    </lineage>
</organism>
<name>SUFS_SALTI</name>
<gene>
    <name evidence="1" type="primary">sufS</name>
    <name type="ordered locus">STY1750</name>
    <name type="ordered locus">t1241</name>
</gene>
<sequence length="406" mass="44504">MTFPVEKVRADFPILQREVNGLPLAYLDSAASAQKPNQVIDAESAFYRHGYAAVHRGIHTLSAQATESMENVRKQASRFINARSAEELVFVRGTTEGINLVANSWGTENIRAGDNIIISEMEHHANIVPWQMLCERKGAELRVIPLHPDGTLRLETLAALFDDRTRLLAITHVSNVLGTENPLPDMIALARQHGAKVLVDGAQAVMHHAVDVQALDCDFYVFSGHKLYGPTGIGILYVKEALLQEMPPWEGGGSMISTVSLTQGTTWAKAPWRFEAGTPNTGGIIGLGAAIDYVTSLGLDKIGDYEQMLMRYALEQLAQVPDITLYGPAQRLGVIAFNLGKHHAYDVGSFLDNYGIAVRTGHHCAMPLMAWYGVPAMCRASLAMYNTHEEVDRLVAGLTRIHRLLG</sequence>
<accession>Q8XF77</accession>
<accession>Q7AMW8</accession>
<protein>
    <recommendedName>
        <fullName evidence="1">Cysteine desulfurase</fullName>
        <ecNumber evidence="1">2.8.1.7</ecNumber>
    </recommendedName>
    <alternativeName>
        <fullName evidence="1">Selenocysteine beta-lyase</fullName>
        <shortName evidence="1">SCL</shortName>
    </alternativeName>
    <alternativeName>
        <fullName evidence="1">Selenocysteine lyase</fullName>
        <ecNumber evidence="1">4.4.1.16</ecNumber>
    </alternativeName>
    <alternativeName>
        <fullName evidence="1">Selenocysteine reductase</fullName>
    </alternativeName>
</protein>
<dbReference type="EC" id="2.8.1.7" evidence="1"/>
<dbReference type="EC" id="4.4.1.16" evidence="1"/>
<dbReference type="EMBL" id="AE014613">
    <property type="protein sequence ID" value="AAO68896.1"/>
    <property type="molecule type" value="Genomic_DNA"/>
</dbReference>
<dbReference type="EMBL" id="AL513382">
    <property type="protein sequence ID" value="CAD01992.1"/>
    <property type="molecule type" value="Genomic_DNA"/>
</dbReference>
<dbReference type="RefSeq" id="NP_456151.1">
    <property type="nucleotide sequence ID" value="NC_003198.1"/>
</dbReference>
<dbReference type="RefSeq" id="WP_000143859.1">
    <property type="nucleotide sequence ID" value="NZ_WSUR01000011.1"/>
</dbReference>
<dbReference type="SMR" id="Q8XF77"/>
<dbReference type="STRING" id="220341.gene:17585684"/>
<dbReference type="KEGG" id="stt:t1241"/>
<dbReference type="KEGG" id="sty:STY1750"/>
<dbReference type="PATRIC" id="fig|220341.7.peg.1761"/>
<dbReference type="eggNOG" id="COG0520">
    <property type="taxonomic scope" value="Bacteria"/>
</dbReference>
<dbReference type="HOGENOM" id="CLU_003433_2_5_6"/>
<dbReference type="OMA" id="LVTWQQI"/>
<dbReference type="OrthoDB" id="9808002at2"/>
<dbReference type="UniPathway" id="UPA00266"/>
<dbReference type="Proteomes" id="UP000000541">
    <property type="component" value="Chromosome"/>
</dbReference>
<dbReference type="Proteomes" id="UP000002670">
    <property type="component" value="Chromosome"/>
</dbReference>
<dbReference type="GO" id="GO:0005737">
    <property type="term" value="C:cytoplasm"/>
    <property type="evidence" value="ECO:0007669"/>
    <property type="project" value="UniProtKB-SubCell"/>
</dbReference>
<dbReference type="GO" id="GO:0031071">
    <property type="term" value="F:cysteine desulfurase activity"/>
    <property type="evidence" value="ECO:0007669"/>
    <property type="project" value="UniProtKB-UniRule"/>
</dbReference>
<dbReference type="GO" id="GO:0030170">
    <property type="term" value="F:pyridoxal phosphate binding"/>
    <property type="evidence" value="ECO:0007669"/>
    <property type="project" value="InterPro"/>
</dbReference>
<dbReference type="GO" id="GO:0009000">
    <property type="term" value="F:selenocysteine lyase activity"/>
    <property type="evidence" value="ECO:0007669"/>
    <property type="project" value="UniProtKB-UniRule"/>
</dbReference>
<dbReference type="GO" id="GO:0006534">
    <property type="term" value="P:cysteine metabolic process"/>
    <property type="evidence" value="ECO:0007669"/>
    <property type="project" value="InterPro"/>
</dbReference>
<dbReference type="CDD" id="cd06453">
    <property type="entry name" value="SufS_like"/>
    <property type="match status" value="1"/>
</dbReference>
<dbReference type="FunFam" id="3.40.640.10:FF:000042">
    <property type="entry name" value="Cysteine desulfurase"/>
    <property type="match status" value="1"/>
</dbReference>
<dbReference type="Gene3D" id="3.90.1150.10">
    <property type="entry name" value="Aspartate Aminotransferase, domain 1"/>
    <property type="match status" value="1"/>
</dbReference>
<dbReference type="Gene3D" id="3.40.640.10">
    <property type="entry name" value="Type I PLP-dependent aspartate aminotransferase-like (Major domain)"/>
    <property type="match status" value="1"/>
</dbReference>
<dbReference type="HAMAP" id="MF_01831">
    <property type="entry name" value="SufS_aminotrans_5"/>
    <property type="match status" value="1"/>
</dbReference>
<dbReference type="InterPro" id="IPR000192">
    <property type="entry name" value="Aminotrans_V_dom"/>
</dbReference>
<dbReference type="InterPro" id="IPR020578">
    <property type="entry name" value="Aminotrans_V_PyrdxlP_BS"/>
</dbReference>
<dbReference type="InterPro" id="IPR010970">
    <property type="entry name" value="Cys_dSase_SufS"/>
</dbReference>
<dbReference type="InterPro" id="IPR015424">
    <property type="entry name" value="PyrdxlP-dep_Trfase"/>
</dbReference>
<dbReference type="InterPro" id="IPR015421">
    <property type="entry name" value="PyrdxlP-dep_Trfase_major"/>
</dbReference>
<dbReference type="InterPro" id="IPR015422">
    <property type="entry name" value="PyrdxlP-dep_Trfase_small"/>
</dbReference>
<dbReference type="NCBIfam" id="NF006791">
    <property type="entry name" value="PRK09295.1"/>
    <property type="match status" value="1"/>
</dbReference>
<dbReference type="NCBIfam" id="TIGR01979">
    <property type="entry name" value="sufS"/>
    <property type="match status" value="1"/>
</dbReference>
<dbReference type="PANTHER" id="PTHR43586">
    <property type="entry name" value="CYSTEINE DESULFURASE"/>
    <property type="match status" value="1"/>
</dbReference>
<dbReference type="PANTHER" id="PTHR43586:SF25">
    <property type="entry name" value="CYSTEINE DESULFURASE"/>
    <property type="match status" value="1"/>
</dbReference>
<dbReference type="Pfam" id="PF00266">
    <property type="entry name" value="Aminotran_5"/>
    <property type="match status" value="1"/>
</dbReference>
<dbReference type="SUPFAM" id="SSF53383">
    <property type="entry name" value="PLP-dependent transferases"/>
    <property type="match status" value="1"/>
</dbReference>
<dbReference type="PROSITE" id="PS00595">
    <property type="entry name" value="AA_TRANSFER_CLASS_5"/>
    <property type="match status" value="1"/>
</dbReference>